<organism>
    <name type="scientific">Pongo pygmaeus</name>
    <name type="common">Bornean orangutan</name>
    <dbReference type="NCBI Taxonomy" id="9600"/>
    <lineage>
        <taxon>Eukaryota</taxon>
        <taxon>Metazoa</taxon>
        <taxon>Chordata</taxon>
        <taxon>Craniata</taxon>
        <taxon>Vertebrata</taxon>
        <taxon>Euteleostomi</taxon>
        <taxon>Mammalia</taxon>
        <taxon>Eutheria</taxon>
        <taxon>Euarchontoglires</taxon>
        <taxon>Primates</taxon>
        <taxon>Haplorrhini</taxon>
        <taxon>Catarrhini</taxon>
        <taxon>Hominidae</taxon>
        <taxon>Pongo</taxon>
    </lineage>
</organism>
<gene>
    <name type="primary">NDUFS3</name>
</gene>
<dbReference type="EC" id="7.1.1.2" evidence="1"/>
<dbReference type="EMBL" id="DQ885668">
    <property type="protein sequence ID" value="ABH12177.1"/>
    <property type="molecule type" value="mRNA"/>
</dbReference>
<dbReference type="SMR" id="Q0MQG6"/>
<dbReference type="GO" id="GO:0005743">
    <property type="term" value="C:mitochondrial inner membrane"/>
    <property type="evidence" value="ECO:0000250"/>
    <property type="project" value="UniProtKB"/>
</dbReference>
<dbReference type="GO" id="GO:0031966">
    <property type="term" value="C:mitochondrial membrane"/>
    <property type="evidence" value="ECO:0000250"/>
    <property type="project" value="UniProtKB"/>
</dbReference>
<dbReference type="GO" id="GO:0045271">
    <property type="term" value="C:respiratory chain complex I"/>
    <property type="evidence" value="ECO:0000250"/>
    <property type="project" value="UniProtKB"/>
</dbReference>
<dbReference type="GO" id="GO:0008137">
    <property type="term" value="F:NADH dehydrogenase (ubiquinone) activity"/>
    <property type="evidence" value="ECO:0000250"/>
    <property type="project" value="UniProtKB"/>
</dbReference>
<dbReference type="GO" id="GO:0003954">
    <property type="term" value="F:NADH dehydrogenase activity"/>
    <property type="evidence" value="ECO:0000250"/>
    <property type="project" value="UniProtKB"/>
</dbReference>
<dbReference type="GO" id="GO:0006120">
    <property type="term" value="P:mitochondrial electron transport, NADH to ubiquinone"/>
    <property type="evidence" value="ECO:0000250"/>
    <property type="project" value="UniProtKB"/>
</dbReference>
<dbReference type="GO" id="GO:0032981">
    <property type="term" value="P:mitochondrial respiratory chain complex I assembly"/>
    <property type="evidence" value="ECO:0000250"/>
    <property type="project" value="UniProtKB"/>
</dbReference>
<dbReference type="GO" id="GO:0072593">
    <property type="term" value="P:reactive oxygen species metabolic process"/>
    <property type="evidence" value="ECO:0000250"/>
    <property type="project" value="UniProtKB"/>
</dbReference>
<dbReference type="FunFam" id="3.30.460.80:FF:000002">
    <property type="entry name" value="NADH dehydrogenase iron-sulfur protein 3, mitochondrial"/>
    <property type="match status" value="1"/>
</dbReference>
<dbReference type="Gene3D" id="3.30.460.80">
    <property type="entry name" value="NADH:ubiquinone oxidoreductase, 30kDa subunit"/>
    <property type="match status" value="1"/>
</dbReference>
<dbReference type="HAMAP" id="MF_01357">
    <property type="entry name" value="NDH1_NuoC"/>
    <property type="match status" value="1"/>
</dbReference>
<dbReference type="InterPro" id="IPR010218">
    <property type="entry name" value="NADH_DH_suC"/>
</dbReference>
<dbReference type="InterPro" id="IPR037232">
    <property type="entry name" value="NADH_quin_OxRdtase_su_C/D-like"/>
</dbReference>
<dbReference type="InterPro" id="IPR001268">
    <property type="entry name" value="NADH_UbQ_OxRdtase_30kDa_su"/>
</dbReference>
<dbReference type="InterPro" id="IPR020396">
    <property type="entry name" value="NADH_UbQ_OxRdtase_CS"/>
</dbReference>
<dbReference type="NCBIfam" id="TIGR01961">
    <property type="entry name" value="NuoC_fam"/>
    <property type="match status" value="1"/>
</dbReference>
<dbReference type="NCBIfam" id="NF004733">
    <property type="entry name" value="PRK06074.1-5"/>
    <property type="match status" value="1"/>
</dbReference>
<dbReference type="PANTHER" id="PTHR10884:SF14">
    <property type="entry name" value="NADH DEHYDROGENASE [UBIQUINONE] IRON-SULFUR PROTEIN 3, MITOCHONDRIAL"/>
    <property type="match status" value="1"/>
</dbReference>
<dbReference type="PANTHER" id="PTHR10884">
    <property type="entry name" value="NADH DEHYDROGENASE UBIQUINONE IRON-SULFUR PROTEIN 3"/>
    <property type="match status" value="1"/>
</dbReference>
<dbReference type="Pfam" id="PF00329">
    <property type="entry name" value="Complex1_30kDa"/>
    <property type="match status" value="1"/>
</dbReference>
<dbReference type="SUPFAM" id="SSF143243">
    <property type="entry name" value="Nqo5-like"/>
    <property type="match status" value="1"/>
</dbReference>
<dbReference type="PROSITE" id="PS00542">
    <property type="entry name" value="COMPLEX1_30K"/>
    <property type="match status" value="1"/>
</dbReference>
<name>NDUS3_PONPY</name>
<keyword id="KW-0249">Electron transport</keyword>
<keyword id="KW-0472">Membrane</keyword>
<keyword id="KW-0496">Mitochondrion</keyword>
<keyword id="KW-0999">Mitochondrion inner membrane</keyword>
<keyword id="KW-0520">NAD</keyword>
<keyword id="KW-0560">Oxidoreductase</keyword>
<keyword id="KW-0679">Respiratory chain</keyword>
<keyword id="KW-0809">Transit peptide</keyword>
<keyword id="KW-1278">Translocase</keyword>
<keyword id="KW-0813">Transport</keyword>
<keyword id="KW-0830">Ubiquinone</keyword>
<feature type="transit peptide" description="Mitochondrion" evidence="2">
    <location>
        <begin position="1"/>
        <end position="35"/>
    </location>
</feature>
<feature type="chain" id="PRO_0000251861" description="NADH dehydrogenase [ubiquinone] iron-sulfur protein 3, mitochondrial">
    <location>
        <begin position="36"/>
        <end position="263"/>
    </location>
</feature>
<proteinExistence type="evidence at transcript level"/>
<comment type="function">
    <text evidence="1">Core subunit of the mitochondrial membrane respiratory chain NADH dehydrogenase (Complex I) which catalyzes electron transfer from NADH through the respiratory chain, using ubiquinone as an electron acceptor (By similarity). Essential for the catalytic activity and assembly of complex I (By similarity).</text>
</comment>
<comment type="catalytic activity">
    <reaction evidence="1">
        <text>a ubiquinone + NADH + 5 H(+)(in) = a ubiquinol + NAD(+) + 4 H(+)(out)</text>
        <dbReference type="Rhea" id="RHEA:29091"/>
        <dbReference type="Rhea" id="RHEA-COMP:9565"/>
        <dbReference type="Rhea" id="RHEA-COMP:9566"/>
        <dbReference type="ChEBI" id="CHEBI:15378"/>
        <dbReference type="ChEBI" id="CHEBI:16389"/>
        <dbReference type="ChEBI" id="CHEBI:17976"/>
        <dbReference type="ChEBI" id="CHEBI:57540"/>
        <dbReference type="ChEBI" id="CHEBI:57945"/>
        <dbReference type="EC" id="7.1.1.2"/>
    </reaction>
</comment>
<comment type="subunit">
    <text evidence="1">Core subunit of respiratory chain NADH dehydrogenase (Complex I) which is composed of 45 different subunits (By similarity). Interacts with NDUFAF3 (By similarity). Interacts with RAB5IF (By similarity). Found in subcomplexes containing subunits NDUFS2, MT-ND1 and NDUFA13 (By similarity).</text>
</comment>
<comment type="subcellular location">
    <subcellularLocation>
        <location evidence="1">Mitochondrion inner membrane</location>
        <topology evidence="1">Peripheral membrane protein</topology>
        <orientation evidence="1">Matrix side</orientation>
    </subcellularLocation>
</comment>
<comment type="similarity">
    <text evidence="3">Belongs to the complex I 30 kDa subunit family.</text>
</comment>
<reference key="1">
    <citation type="journal article" date="2006" name="Gene">
        <title>Adaptive selection of mitochondrial complex I subunits during primate radiation.</title>
        <authorList>
            <person name="Mishmar D."/>
            <person name="Ruiz-Pesini E."/>
            <person name="Mondragon-Palomino M."/>
            <person name="Procaccio V."/>
            <person name="Gaut B."/>
            <person name="Wallace D.C."/>
        </authorList>
    </citation>
    <scope>NUCLEOTIDE SEQUENCE [MRNA]</scope>
</reference>
<evidence type="ECO:0000250" key="1">
    <source>
        <dbReference type="UniProtKB" id="O75489"/>
    </source>
</evidence>
<evidence type="ECO:0000255" key="2"/>
<evidence type="ECO:0000305" key="3"/>
<protein>
    <recommendedName>
        <fullName>NADH dehydrogenase [ubiquinone] iron-sulfur protein 3, mitochondrial</fullName>
        <ecNumber evidence="1">7.1.1.2</ecNumber>
    </recommendedName>
    <alternativeName>
        <fullName>Complex I-30kD</fullName>
        <shortName>CI-30kD</shortName>
    </alternativeName>
    <alternativeName>
        <fullName>NADH-ubiquinone oxidoreductase 30 kDa subunit</fullName>
    </alternativeName>
</protein>
<accession>Q0MQG6</accession>
<sequence>MVAAVARLWWRGLLGASALTRGAGRPSVLLLPVRRESAGADTRPTVRPRNDVAHQQLSAFGEYVAEILPKYVQQVQVSCFNELEVCIHPDGVIPVLTFLRDHTNAQFKSLVDLTAVDVPTRQNRFEIVYNLLSLRFNSRIRVKTYTDELTPIESAVSVFKAANWYEREIWDMFGVFFANHPDLRRILTDYGFEGHPFRKDFPLSGYVELRYDDEVKRVVAEPVELAQEFRKFDLNSPWEAFPVYRQPPESLKLEAGDKKPDAK</sequence>